<gene>
    <name type="primary">Tf2-3</name>
    <name type="synonym">Tf2-1</name>
    <name type="ORF">SPAC2E1P3.03c</name>
</gene>
<comment type="PTM">
    <text evidence="6">Processing of the polyproteins proceeds by an ordered pathway, called maturation. It involves the initial cleavage of a 27 kDa capsid protein (CA) from the N-terminus of the polyprotein, followed by the cleavage of a 56 kDa integrase (IN) from the C-terminus. This leaves a 72 kDa protease-reverse transcriptase fusion protein (PR-RT), which does not seem to be processed further.</text>
</comment>
<comment type="miscellaneous">
    <text>Retrotransposons are mobile genetic entities that are able to replicate via an RNA intermediate and a reverse transcription step. In contrast to retroviruses, retrotransposons are non-infectious, lack an envelope and remain intracellular. Tf2 retrotransposons belong to the gypsy-like elements (metaviridae).</text>
</comment>
<feature type="chain" id="PRO_0000424425" description="Transposon Tf2-3 polyprotein">
    <location>
        <begin position="1"/>
        <end position="1333"/>
    </location>
</feature>
<feature type="domain" description="Peptidase A2">
    <location>
        <begin position="266"/>
        <end position="342"/>
    </location>
</feature>
<feature type="domain" description="Reverse transcriptase" evidence="2">
    <location>
        <begin position="436"/>
        <end position="615"/>
    </location>
</feature>
<feature type="domain" description="Integrase catalytic" evidence="3">
    <location>
        <begin position="979"/>
        <end position="1138"/>
    </location>
</feature>
<feature type="region of interest" description="Disordered" evidence="5">
    <location>
        <begin position="199"/>
        <end position="231"/>
    </location>
</feature>
<feature type="compositionally biased region" description="Polar residues" evidence="5">
    <location>
        <begin position="218"/>
        <end position="231"/>
    </location>
</feature>
<feature type="active site" description="For protease activity" evidence="4">
    <location>
        <position position="271"/>
    </location>
</feature>
<feature type="binding site" evidence="1">
    <location>
        <position position="502"/>
    </location>
    <ligand>
        <name>Mg(2+)</name>
        <dbReference type="ChEBI" id="CHEBI:18420"/>
        <label>1</label>
        <note>catalytic; for reverse transcriptase activity</note>
    </ligand>
</feature>
<feature type="binding site" evidence="1">
    <location>
        <position position="566"/>
    </location>
    <ligand>
        <name>Mg(2+)</name>
        <dbReference type="ChEBI" id="CHEBI:18420"/>
        <label>1</label>
        <note>catalytic; for reverse transcriptase activity</note>
    </ligand>
</feature>
<feature type="binding site" evidence="1">
    <location>
        <position position="567"/>
    </location>
    <ligand>
        <name>Mg(2+)</name>
        <dbReference type="ChEBI" id="CHEBI:18420"/>
        <label>1</label>
        <note>catalytic; for reverse transcriptase activity</note>
    </ligand>
</feature>
<feature type="binding site" evidence="1">
    <location>
        <position position="990"/>
    </location>
    <ligand>
        <name>Mg(2+)</name>
        <dbReference type="ChEBI" id="CHEBI:18420"/>
        <label>2</label>
        <note>catalytic; for integrase activity</note>
    </ligand>
</feature>
<feature type="binding site" evidence="1">
    <location>
        <position position="1050"/>
    </location>
    <ligand>
        <name>Mg(2+)</name>
        <dbReference type="ChEBI" id="CHEBI:18420"/>
        <label>2</label>
        <note>catalytic; for integrase activity</note>
    </ligand>
</feature>
<reference key="1">
    <citation type="journal article" date="1993" name="Gene">
        <title>Sequence analysis of closely related retrotransposon families from fission yeast.</title>
        <authorList>
            <person name="Weaver D.C."/>
            <person name="Shpakovski G.V."/>
            <person name="Caputo E."/>
            <person name="Levin H.L."/>
            <person name="Boeke J.D."/>
        </authorList>
    </citation>
    <scope>NUCLEOTIDE SEQUENCE [GENOMIC DNA]</scope>
    <source>
        <strain>972 / ATCC 24843</strain>
    </source>
</reference>
<reference key="2">
    <citation type="journal article" date="2002" name="Nature">
        <title>The genome sequence of Schizosaccharomyces pombe.</title>
        <authorList>
            <person name="Wood V."/>
            <person name="Gwilliam R."/>
            <person name="Rajandream M.A."/>
            <person name="Lyne M.H."/>
            <person name="Lyne R."/>
            <person name="Stewart A."/>
            <person name="Sgouros J.G."/>
            <person name="Peat N."/>
            <person name="Hayles J."/>
            <person name="Baker S.G."/>
            <person name="Basham D."/>
            <person name="Bowman S."/>
            <person name="Brooks K."/>
            <person name="Brown D."/>
            <person name="Brown S."/>
            <person name="Chillingworth T."/>
            <person name="Churcher C.M."/>
            <person name="Collins M."/>
            <person name="Connor R."/>
            <person name="Cronin A."/>
            <person name="Davis P."/>
            <person name="Feltwell T."/>
            <person name="Fraser A."/>
            <person name="Gentles S."/>
            <person name="Goble A."/>
            <person name="Hamlin N."/>
            <person name="Harris D.E."/>
            <person name="Hidalgo J."/>
            <person name="Hodgson G."/>
            <person name="Holroyd S."/>
            <person name="Hornsby T."/>
            <person name="Howarth S."/>
            <person name="Huckle E.J."/>
            <person name="Hunt S."/>
            <person name="Jagels K."/>
            <person name="James K.D."/>
            <person name="Jones L."/>
            <person name="Jones M."/>
            <person name="Leather S."/>
            <person name="McDonald S."/>
            <person name="McLean J."/>
            <person name="Mooney P."/>
            <person name="Moule S."/>
            <person name="Mungall K.L."/>
            <person name="Murphy L.D."/>
            <person name="Niblett D."/>
            <person name="Odell C."/>
            <person name="Oliver K."/>
            <person name="O'Neil S."/>
            <person name="Pearson D."/>
            <person name="Quail M.A."/>
            <person name="Rabbinowitsch E."/>
            <person name="Rutherford K.M."/>
            <person name="Rutter S."/>
            <person name="Saunders D."/>
            <person name="Seeger K."/>
            <person name="Sharp S."/>
            <person name="Skelton J."/>
            <person name="Simmonds M.N."/>
            <person name="Squares R."/>
            <person name="Squares S."/>
            <person name="Stevens K."/>
            <person name="Taylor K."/>
            <person name="Taylor R.G."/>
            <person name="Tivey A."/>
            <person name="Walsh S.V."/>
            <person name="Warren T."/>
            <person name="Whitehead S."/>
            <person name="Woodward J.R."/>
            <person name="Volckaert G."/>
            <person name="Aert R."/>
            <person name="Robben J."/>
            <person name="Grymonprez B."/>
            <person name="Weltjens I."/>
            <person name="Vanstreels E."/>
            <person name="Rieger M."/>
            <person name="Schaefer M."/>
            <person name="Mueller-Auer S."/>
            <person name="Gabel C."/>
            <person name="Fuchs M."/>
            <person name="Duesterhoeft A."/>
            <person name="Fritzc C."/>
            <person name="Holzer E."/>
            <person name="Moestl D."/>
            <person name="Hilbert H."/>
            <person name="Borzym K."/>
            <person name="Langer I."/>
            <person name="Beck A."/>
            <person name="Lehrach H."/>
            <person name="Reinhardt R."/>
            <person name="Pohl T.M."/>
            <person name="Eger P."/>
            <person name="Zimmermann W."/>
            <person name="Wedler H."/>
            <person name="Wambutt R."/>
            <person name="Purnelle B."/>
            <person name="Goffeau A."/>
            <person name="Cadieu E."/>
            <person name="Dreano S."/>
            <person name="Gloux S."/>
            <person name="Lelaure V."/>
            <person name="Mottier S."/>
            <person name="Galibert F."/>
            <person name="Aves S.J."/>
            <person name="Xiang Z."/>
            <person name="Hunt C."/>
            <person name="Moore K."/>
            <person name="Hurst S.M."/>
            <person name="Lucas M."/>
            <person name="Rochet M."/>
            <person name="Gaillardin C."/>
            <person name="Tallada V.A."/>
            <person name="Garzon A."/>
            <person name="Thode G."/>
            <person name="Daga R.R."/>
            <person name="Cruzado L."/>
            <person name="Jimenez J."/>
            <person name="Sanchez M."/>
            <person name="del Rey F."/>
            <person name="Benito J."/>
            <person name="Dominguez A."/>
            <person name="Revuelta J.L."/>
            <person name="Moreno S."/>
            <person name="Armstrong J."/>
            <person name="Forsburg S.L."/>
            <person name="Cerutti L."/>
            <person name="Lowe T."/>
            <person name="McCombie W.R."/>
            <person name="Paulsen I."/>
            <person name="Potashkin J."/>
            <person name="Shpakovski G.V."/>
            <person name="Ussery D."/>
            <person name="Barrell B.G."/>
            <person name="Nurse P."/>
        </authorList>
    </citation>
    <scope>NUCLEOTIDE SEQUENCE [LARGE SCALE GENOMIC DNA]</scope>
    <source>
        <strain>972 / ATCC 24843</strain>
    </source>
</reference>
<reference key="3">
    <citation type="journal article" date="1998" name="Mol. Cell. Biol.">
        <title>Schizosaccharomyces pombe retrotransposon Tf2 mobilizes primarily through homologous cDNA recombination.</title>
        <authorList>
            <person name="Hoff E.F."/>
            <person name="Levin H.L."/>
            <person name="Boeke J.D."/>
        </authorList>
    </citation>
    <scope>PROTEOLYTIC PROCESSING</scope>
</reference>
<reference key="4">
    <citation type="journal article" date="2003" name="Genome Res.">
        <title>Retrotransposons and their recognition of pol II promoters: a comprehensive survey of the transposable elements from the complete genome sequence of Schizosaccharomyces pombe.</title>
        <authorList>
            <person name="Bowen N.J."/>
            <person name="Jordan I.K."/>
            <person name="Epstein J.A."/>
            <person name="Wood V."/>
            <person name="Levin H.L."/>
        </authorList>
    </citation>
    <scope>NOMENCLATURE</scope>
</reference>
<sequence length="1333" mass="154916">MSYANYRYMKARAKRWRPENLDGIQTSDEHLINLFAKILSKHVPEIGKFDPNKDVESYISKLDQHFTEYPSLFPNEHTKRQYTLNHLEELEQQFAERMFSENGSLTWQELLRQTGKVQGSNKGDRLTKTFEGFRNQLDKVQFIRKLMSKANVDDFHTRLFILWMLPYSLRKLKERNYWKSEISEIYDFLEDKRTASYGKTHKRFQPQNKNLGKESLSKKNNTTNSRNLRKTNVSRIEYSSNKFLNHTRKRYEMVLQAELPDFKCSIPCLIDTGAQANIITEETVRAHKLPTRPWSKSVIYGGVYPNKINRKTIKLNISLNGISIKTEFLVVKKFSHPAAISFTTLYDNNIEISSSKHTLSQMNKVSNIVKEPELPDIYKEFKDITAETNTEKLPKPIKGLEFEVELTQENYRLPIRNYPLPPGKMQAMNDEINQGLKSGIIRESKAINACPVMFVPKKEGTLRMVVDYKPLNKYVKPNIYPLPLIEQLLAKIQGSTIFTKLDLKSAYHLIRVRKGDEHKLAFRCPRGVFEYLVMPYGISTAPAHFQYFINTILGEAKESHVVCYMDDILIHSKSESEHVKHVKDVLQKLKNANLIINQAKCEFHQSQVKFIGYHISEKGFTPCQENIDKVLQWKQPKNRKELRQFLGSVNYLRKFIPKTSQLTHPLNNLLKKDVRWKWTPTQTQAIENIKQCLVSPPVLRHFDFSKKILLETDASDVAVGAVLSQKHDDDKYYPVGYYSAKMSKAQLNYSVSDKEMLAIIKSLKHWRHYLESTIEPFKILTDHRNLIGRITNESEPENKRLARWQLFLQDFNFEINYRPGSANHIADALSRIVDETEPIPKDSEDNSINFVNQISITDDFKNQVVTEYTNDTKLLNLLNNEDKRVEENIQLKDGLLINSKDQILLPNDTQLTRTIIKKYHEEGKLIHPGIELLTNIILRRFTWKGIRKQIQEYVQNCHTCQINKSRNHKPYGPLQPIPPSERPWESLSMDFITALPESSGYNALFVVVDRFSKMAILVPCTKSITAEQTARMFDQRVIAYFGNPKEIIADNDHIFTSQTWKDFAHKYNFVMKFSLPYRPQTDGQTERTNQTVEKLLRCVCSTHPNTWVDHISLVQQSYNNAIHSATQMTPFEIVHRYSPALSPLELPSFSDKTDENSQETIQVFQTVKEHLNTNNIKMKKYFDMKIQEIEEFQPGDLVMVKRTKTGFLHKSNKLAPSFAGPFYVLQKSGPNNYELDLPDSIKHMFSSTFHVSHLEKYRHNSELNYATIDESDIGTILHILEHKNREQVLYLNVKYISNLNPSTIMSGWTTLATALQADKAIVNDYIKNNNLNI</sequence>
<evidence type="ECO:0000250" key="1"/>
<evidence type="ECO:0000255" key="2">
    <source>
        <dbReference type="PROSITE-ProRule" id="PRU00405"/>
    </source>
</evidence>
<evidence type="ECO:0000255" key="3">
    <source>
        <dbReference type="PROSITE-ProRule" id="PRU00457"/>
    </source>
</evidence>
<evidence type="ECO:0000255" key="4">
    <source>
        <dbReference type="PROSITE-ProRule" id="PRU10094"/>
    </source>
</evidence>
<evidence type="ECO:0000256" key="5">
    <source>
        <dbReference type="SAM" id="MobiDB-lite"/>
    </source>
</evidence>
<evidence type="ECO:0000269" key="6">
    <source>
    </source>
</evidence>
<name>TF23_SCHPO</name>
<protein>
    <recommendedName>
        <fullName>Transposon Tf2-3 polyprotein</fullName>
    </recommendedName>
    <alternativeName>
        <fullName>Retrotransposable element Tf2 155 kDa protein</fullName>
    </alternativeName>
</protein>
<organism>
    <name type="scientific">Schizosaccharomyces pombe (strain 972 / ATCC 24843)</name>
    <name type="common">Fission yeast</name>
    <dbReference type="NCBI Taxonomy" id="284812"/>
    <lineage>
        <taxon>Eukaryota</taxon>
        <taxon>Fungi</taxon>
        <taxon>Dikarya</taxon>
        <taxon>Ascomycota</taxon>
        <taxon>Taphrinomycotina</taxon>
        <taxon>Schizosaccharomycetes</taxon>
        <taxon>Schizosaccharomycetales</taxon>
        <taxon>Schizosaccharomycetaceae</taxon>
        <taxon>Schizosaccharomyces</taxon>
    </lineage>
</organism>
<accession>P0CT36</accession>
<accession>Q05654</accession>
<accession>Q96TJ6</accession>
<keyword id="KW-0064">Aspartyl protease</keyword>
<keyword id="KW-0229">DNA integration</keyword>
<keyword id="KW-0233">DNA recombination</keyword>
<keyword id="KW-0238">DNA-binding</keyword>
<keyword id="KW-0239">DNA-directed DNA polymerase</keyword>
<keyword id="KW-0255">Endonuclease</keyword>
<keyword id="KW-0378">Hydrolase</keyword>
<keyword id="KW-0460">Magnesium</keyword>
<keyword id="KW-0479">Metal-binding</keyword>
<keyword id="KW-0511">Multifunctional enzyme</keyword>
<keyword id="KW-0540">Nuclease</keyword>
<keyword id="KW-0548">Nucleotidyltransferase</keyword>
<keyword id="KW-0645">Protease</keyword>
<keyword id="KW-1185">Reference proteome</keyword>
<keyword id="KW-0694">RNA-binding</keyword>
<keyword id="KW-0695">RNA-directed DNA polymerase</keyword>
<keyword id="KW-0808">Transferase</keyword>
<keyword id="KW-0814">Transposable element</keyword>
<proteinExistence type="evidence at protein level"/>
<dbReference type="EMBL" id="L10324">
    <property type="protein sequence ID" value="AAA91215.1"/>
    <property type="molecule type" value="Genomic_DNA"/>
</dbReference>
<dbReference type="EMBL" id="CU329670">
    <property type="protein sequence ID" value="CAB83007.1"/>
    <property type="molecule type" value="Genomic_DNA"/>
</dbReference>
<dbReference type="PIR" id="T38401">
    <property type="entry name" value="T38401"/>
</dbReference>
<dbReference type="RefSeq" id="NP_593984.1">
    <property type="nucleotide sequence ID" value="NM_001019410.2"/>
</dbReference>
<dbReference type="SMR" id="P0CT36"/>
<dbReference type="FunCoup" id="P0CT36">
    <property type="interactions" value="2"/>
</dbReference>
<dbReference type="STRING" id="284812.P0CT36"/>
<dbReference type="MEROPS" id="A02.051"/>
<dbReference type="EnsemblFungi" id="SPAC27E2.08.1">
    <property type="protein sequence ID" value="SPAC27E2.08.1:pep"/>
    <property type="gene ID" value="SPAC27E2.08"/>
</dbReference>
<dbReference type="EnsemblFungi" id="SPAC2E1P3.03c.1">
    <property type="protein sequence ID" value="SPAC2E1P3.03c.1:pep"/>
    <property type="gene ID" value="SPAC2E1P3.03c"/>
</dbReference>
<dbReference type="EnsemblFungi" id="SPAPB15E9.03c.1">
    <property type="protein sequence ID" value="SPAPB15E9.03c.1:pep"/>
    <property type="gene ID" value="SPAPB15E9.03c"/>
</dbReference>
<dbReference type="EnsemblFungi" id="SPCC1020.14.1">
    <property type="protein sequence ID" value="SPCC1020.14.1:pep"/>
    <property type="gene ID" value="SPCC1020.14"/>
</dbReference>
<dbReference type="GeneID" id="2541833"/>
<dbReference type="KEGG" id="spo:2538755"/>
<dbReference type="KEGG" id="spo:2541833"/>
<dbReference type="KEGG" id="spo:2541991"/>
<dbReference type="KEGG" id="spo:3361422"/>
<dbReference type="PomBase" id="SPAC2E1P3.03c">
    <property type="gene designation" value="Tf2-3"/>
</dbReference>
<dbReference type="VEuPathDB" id="FungiDB:SPAC27E2.08"/>
<dbReference type="VEuPathDB" id="FungiDB:SPAC2E1P3.03c"/>
<dbReference type="VEuPathDB" id="FungiDB:SPAPB15E9.03c"/>
<dbReference type="VEuPathDB" id="FungiDB:SPCC1020.14"/>
<dbReference type="HOGENOM" id="CLU_000384_4_0_1"/>
<dbReference type="InParanoid" id="P0CT36"/>
<dbReference type="PRO" id="PR:P0CT36"/>
<dbReference type="Proteomes" id="UP000002485">
    <property type="component" value="Chromosome I"/>
</dbReference>
<dbReference type="GO" id="GO:0005634">
    <property type="term" value="C:nucleus"/>
    <property type="evidence" value="ECO:0007669"/>
    <property type="project" value="UniProtKB-ARBA"/>
</dbReference>
<dbReference type="GO" id="GO:0004190">
    <property type="term" value="F:aspartic-type endopeptidase activity"/>
    <property type="evidence" value="ECO:0007669"/>
    <property type="project" value="UniProtKB-KW"/>
</dbReference>
<dbReference type="GO" id="GO:0003677">
    <property type="term" value="F:DNA binding"/>
    <property type="evidence" value="ECO:0007669"/>
    <property type="project" value="UniProtKB-KW"/>
</dbReference>
<dbReference type="GO" id="GO:0003887">
    <property type="term" value="F:DNA-directed DNA polymerase activity"/>
    <property type="evidence" value="ECO:0007669"/>
    <property type="project" value="UniProtKB-KW"/>
</dbReference>
<dbReference type="GO" id="GO:0004519">
    <property type="term" value="F:endonuclease activity"/>
    <property type="evidence" value="ECO:0007669"/>
    <property type="project" value="UniProtKB-KW"/>
</dbReference>
<dbReference type="GO" id="GO:0046872">
    <property type="term" value="F:metal ion binding"/>
    <property type="evidence" value="ECO:0007669"/>
    <property type="project" value="UniProtKB-KW"/>
</dbReference>
<dbReference type="GO" id="GO:0003723">
    <property type="term" value="F:RNA binding"/>
    <property type="evidence" value="ECO:0007669"/>
    <property type="project" value="UniProtKB-KW"/>
</dbReference>
<dbReference type="GO" id="GO:0003964">
    <property type="term" value="F:RNA-directed DNA polymerase activity"/>
    <property type="evidence" value="ECO:0007669"/>
    <property type="project" value="UniProtKB-KW"/>
</dbReference>
<dbReference type="GO" id="GO:0015074">
    <property type="term" value="P:DNA integration"/>
    <property type="evidence" value="ECO:0007669"/>
    <property type="project" value="UniProtKB-KW"/>
</dbReference>
<dbReference type="GO" id="GO:0006310">
    <property type="term" value="P:DNA recombination"/>
    <property type="evidence" value="ECO:0007669"/>
    <property type="project" value="UniProtKB-KW"/>
</dbReference>
<dbReference type="GO" id="GO:0006508">
    <property type="term" value="P:proteolysis"/>
    <property type="evidence" value="ECO:0007669"/>
    <property type="project" value="UniProtKB-KW"/>
</dbReference>
<dbReference type="CDD" id="cd00303">
    <property type="entry name" value="retropepsin_like"/>
    <property type="match status" value="1"/>
</dbReference>
<dbReference type="CDD" id="cd09274">
    <property type="entry name" value="RNase_HI_RT_Ty3"/>
    <property type="match status" value="1"/>
</dbReference>
<dbReference type="CDD" id="cd01647">
    <property type="entry name" value="RT_LTR"/>
    <property type="match status" value="1"/>
</dbReference>
<dbReference type="FunFam" id="3.10.20.370:FF:000003">
    <property type="entry name" value="Transposon Tf2-6 polyprotein"/>
    <property type="match status" value="1"/>
</dbReference>
<dbReference type="FunFam" id="3.30.70.270:FF:000045">
    <property type="entry name" value="Transposon Tf2-7 polyprotein"/>
    <property type="match status" value="1"/>
</dbReference>
<dbReference type="Gene3D" id="1.10.340.70">
    <property type="match status" value="1"/>
</dbReference>
<dbReference type="Gene3D" id="3.10.20.370">
    <property type="match status" value="1"/>
</dbReference>
<dbReference type="Gene3D" id="3.30.70.270">
    <property type="match status" value="2"/>
</dbReference>
<dbReference type="Gene3D" id="2.40.70.10">
    <property type="entry name" value="Acid Proteases"/>
    <property type="match status" value="1"/>
</dbReference>
<dbReference type="Gene3D" id="3.10.10.10">
    <property type="entry name" value="HIV Type 1 Reverse Transcriptase, subunit A, domain 1"/>
    <property type="match status" value="1"/>
</dbReference>
<dbReference type="Gene3D" id="3.30.420.10">
    <property type="entry name" value="Ribonuclease H-like superfamily/Ribonuclease H"/>
    <property type="match status" value="1"/>
</dbReference>
<dbReference type="InterPro" id="IPR001969">
    <property type="entry name" value="Aspartic_peptidase_AS"/>
</dbReference>
<dbReference type="InterPro" id="IPR043502">
    <property type="entry name" value="DNA/RNA_pol_sf"/>
</dbReference>
<dbReference type="InterPro" id="IPR001584">
    <property type="entry name" value="Integrase_cat-core"/>
</dbReference>
<dbReference type="InterPro" id="IPR041588">
    <property type="entry name" value="Integrase_H2C2"/>
</dbReference>
<dbReference type="InterPro" id="IPR021109">
    <property type="entry name" value="Peptidase_aspartic_dom_sf"/>
</dbReference>
<dbReference type="InterPro" id="IPR050951">
    <property type="entry name" value="Retrovirus_Pol_polyprotein"/>
</dbReference>
<dbReference type="InterPro" id="IPR043128">
    <property type="entry name" value="Rev_trsase/Diguanyl_cyclase"/>
</dbReference>
<dbReference type="InterPro" id="IPR012337">
    <property type="entry name" value="RNaseH-like_sf"/>
</dbReference>
<dbReference type="InterPro" id="IPR036397">
    <property type="entry name" value="RNaseH_sf"/>
</dbReference>
<dbReference type="InterPro" id="IPR000477">
    <property type="entry name" value="RT_dom"/>
</dbReference>
<dbReference type="InterPro" id="IPR041577">
    <property type="entry name" value="RT_RNaseH_2"/>
</dbReference>
<dbReference type="InterPro" id="IPR056924">
    <property type="entry name" value="SH3_Tf2-1"/>
</dbReference>
<dbReference type="InterPro" id="IPR056930">
    <property type="entry name" value="Tf2-1-like_C"/>
</dbReference>
<dbReference type="InterPro" id="IPR024648">
    <property type="entry name" value="Tf2-1-like_dom"/>
</dbReference>
<dbReference type="PANTHER" id="PTHR37984">
    <property type="entry name" value="PROTEIN CBG26694"/>
    <property type="match status" value="1"/>
</dbReference>
<dbReference type="PANTHER" id="PTHR37984:SF5">
    <property type="entry name" value="PROTEIN NYNRIN-LIKE"/>
    <property type="match status" value="1"/>
</dbReference>
<dbReference type="Pfam" id="PF17921">
    <property type="entry name" value="Integrase_H2C2"/>
    <property type="match status" value="1"/>
</dbReference>
<dbReference type="Pfam" id="PF12382">
    <property type="entry name" value="Peptidase_A2_2"/>
    <property type="match status" value="1"/>
</dbReference>
<dbReference type="Pfam" id="PF17919">
    <property type="entry name" value="RT_RNaseH_2"/>
    <property type="match status" value="1"/>
</dbReference>
<dbReference type="Pfam" id="PF00665">
    <property type="entry name" value="rve"/>
    <property type="match status" value="1"/>
</dbReference>
<dbReference type="Pfam" id="PF00078">
    <property type="entry name" value="RVT_1"/>
    <property type="match status" value="1"/>
</dbReference>
<dbReference type="Pfam" id="PF24626">
    <property type="entry name" value="SH3_Tf2-1"/>
    <property type="match status" value="1"/>
</dbReference>
<dbReference type="Pfam" id="PF24614">
    <property type="entry name" value="Tf2-1_C"/>
    <property type="match status" value="1"/>
</dbReference>
<dbReference type="SUPFAM" id="SSF50630">
    <property type="entry name" value="Acid proteases"/>
    <property type="match status" value="1"/>
</dbReference>
<dbReference type="SUPFAM" id="SSF56672">
    <property type="entry name" value="DNA/RNA polymerases"/>
    <property type="match status" value="1"/>
</dbReference>
<dbReference type="SUPFAM" id="SSF53098">
    <property type="entry name" value="Ribonuclease H-like"/>
    <property type="match status" value="1"/>
</dbReference>
<dbReference type="PROSITE" id="PS00141">
    <property type="entry name" value="ASP_PROTEASE"/>
    <property type="match status" value="1"/>
</dbReference>
<dbReference type="PROSITE" id="PS50994">
    <property type="entry name" value="INTEGRASE"/>
    <property type="match status" value="1"/>
</dbReference>
<dbReference type="PROSITE" id="PS50878">
    <property type="entry name" value="RT_POL"/>
    <property type="match status" value="1"/>
</dbReference>